<feature type="chain" id="PRO_1000065896" description="Orotidine 5'-phosphate decarboxylase">
    <location>
        <begin position="1"/>
        <end position="243"/>
    </location>
</feature>
<feature type="active site" description="Proton donor" evidence="1">
    <location>
        <position position="67"/>
    </location>
</feature>
<feature type="binding site" evidence="1">
    <location>
        <position position="16"/>
    </location>
    <ligand>
        <name>substrate</name>
    </ligand>
</feature>
<feature type="binding site" evidence="1">
    <location>
        <position position="38"/>
    </location>
    <ligand>
        <name>substrate</name>
    </ligand>
</feature>
<feature type="binding site" evidence="1">
    <location>
        <begin position="65"/>
        <end position="74"/>
    </location>
    <ligand>
        <name>substrate</name>
    </ligand>
</feature>
<feature type="binding site" evidence="1">
    <location>
        <position position="120"/>
    </location>
    <ligand>
        <name>substrate</name>
    </ligand>
</feature>
<feature type="binding site" evidence="1">
    <location>
        <position position="181"/>
    </location>
    <ligand>
        <name>substrate</name>
    </ligand>
</feature>
<feature type="binding site" evidence="1">
    <location>
        <position position="190"/>
    </location>
    <ligand>
        <name>substrate</name>
    </ligand>
</feature>
<feature type="binding site" evidence="1">
    <location>
        <position position="210"/>
    </location>
    <ligand>
        <name>substrate</name>
    </ligand>
</feature>
<feature type="binding site" evidence="1">
    <location>
        <position position="211"/>
    </location>
    <ligand>
        <name>substrate</name>
    </ligand>
</feature>
<protein>
    <recommendedName>
        <fullName evidence="1">Orotidine 5'-phosphate decarboxylase</fullName>
        <ecNumber evidence="1">4.1.1.23</ecNumber>
    </recommendedName>
    <alternativeName>
        <fullName evidence="1">OMP decarboxylase</fullName>
        <shortName evidence="1">OMPDCase</shortName>
        <shortName evidence="1">OMPdecase</shortName>
    </alternativeName>
</protein>
<accession>A4YJQ1</accession>
<reference key="1">
    <citation type="journal article" date="2007" name="Science">
        <title>Legumes symbioses: absence of nod genes in photosynthetic bradyrhizobia.</title>
        <authorList>
            <person name="Giraud E."/>
            <person name="Moulin L."/>
            <person name="Vallenet D."/>
            <person name="Barbe V."/>
            <person name="Cytryn E."/>
            <person name="Avarre J.-C."/>
            <person name="Jaubert M."/>
            <person name="Simon D."/>
            <person name="Cartieaux F."/>
            <person name="Prin Y."/>
            <person name="Bena G."/>
            <person name="Hannibal L."/>
            <person name="Fardoux J."/>
            <person name="Kojadinovic M."/>
            <person name="Vuillet L."/>
            <person name="Lajus A."/>
            <person name="Cruveiller S."/>
            <person name="Rouy Z."/>
            <person name="Mangenot S."/>
            <person name="Segurens B."/>
            <person name="Dossat C."/>
            <person name="Franck W.L."/>
            <person name="Chang W.-S."/>
            <person name="Saunders E."/>
            <person name="Bruce D."/>
            <person name="Richardson P."/>
            <person name="Normand P."/>
            <person name="Dreyfus B."/>
            <person name="Pignol D."/>
            <person name="Stacey G."/>
            <person name="Emerich D."/>
            <person name="Vermeglio A."/>
            <person name="Medigue C."/>
            <person name="Sadowsky M."/>
        </authorList>
    </citation>
    <scope>NUCLEOTIDE SEQUENCE [LARGE SCALE GENOMIC DNA]</scope>
    <source>
        <strain>ORS 278</strain>
    </source>
</reference>
<gene>
    <name evidence="1" type="primary">pyrF</name>
    <name type="ordered locus">BRADO0160</name>
</gene>
<keyword id="KW-0210">Decarboxylase</keyword>
<keyword id="KW-0456">Lyase</keyword>
<keyword id="KW-0665">Pyrimidine biosynthesis</keyword>
<keyword id="KW-1185">Reference proteome</keyword>
<dbReference type="EC" id="4.1.1.23" evidence="1"/>
<dbReference type="EMBL" id="CU234118">
    <property type="protein sequence ID" value="CAL74127.1"/>
    <property type="molecule type" value="Genomic_DNA"/>
</dbReference>
<dbReference type="RefSeq" id="WP_011923420.1">
    <property type="nucleotide sequence ID" value="NC_009445.1"/>
</dbReference>
<dbReference type="SMR" id="A4YJQ1"/>
<dbReference type="STRING" id="114615.BRADO0160"/>
<dbReference type="KEGG" id="bra:BRADO0160"/>
<dbReference type="eggNOG" id="COG0284">
    <property type="taxonomic scope" value="Bacteria"/>
</dbReference>
<dbReference type="HOGENOM" id="CLU_067069_1_0_5"/>
<dbReference type="OrthoDB" id="9806203at2"/>
<dbReference type="UniPathway" id="UPA00070">
    <property type="reaction ID" value="UER00120"/>
</dbReference>
<dbReference type="Proteomes" id="UP000001994">
    <property type="component" value="Chromosome"/>
</dbReference>
<dbReference type="GO" id="GO:0005829">
    <property type="term" value="C:cytosol"/>
    <property type="evidence" value="ECO:0007669"/>
    <property type="project" value="TreeGrafter"/>
</dbReference>
<dbReference type="GO" id="GO:0004590">
    <property type="term" value="F:orotidine-5'-phosphate decarboxylase activity"/>
    <property type="evidence" value="ECO:0007669"/>
    <property type="project" value="UniProtKB-UniRule"/>
</dbReference>
<dbReference type="GO" id="GO:0006207">
    <property type="term" value="P:'de novo' pyrimidine nucleobase biosynthetic process"/>
    <property type="evidence" value="ECO:0007669"/>
    <property type="project" value="InterPro"/>
</dbReference>
<dbReference type="GO" id="GO:0044205">
    <property type="term" value="P:'de novo' UMP biosynthetic process"/>
    <property type="evidence" value="ECO:0007669"/>
    <property type="project" value="UniProtKB-UniRule"/>
</dbReference>
<dbReference type="CDD" id="cd04725">
    <property type="entry name" value="OMP_decarboxylase_like"/>
    <property type="match status" value="1"/>
</dbReference>
<dbReference type="Gene3D" id="3.20.20.70">
    <property type="entry name" value="Aldolase class I"/>
    <property type="match status" value="1"/>
</dbReference>
<dbReference type="HAMAP" id="MF_01200_B">
    <property type="entry name" value="OMPdecase_type1_B"/>
    <property type="match status" value="1"/>
</dbReference>
<dbReference type="InterPro" id="IPR013785">
    <property type="entry name" value="Aldolase_TIM"/>
</dbReference>
<dbReference type="InterPro" id="IPR014732">
    <property type="entry name" value="OMPdecase"/>
</dbReference>
<dbReference type="InterPro" id="IPR018089">
    <property type="entry name" value="OMPdecase_AS"/>
</dbReference>
<dbReference type="InterPro" id="IPR047596">
    <property type="entry name" value="OMPdecase_bac"/>
</dbReference>
<dbReference type="InterPro" id="IPR001754">
    <property type="entry name" value="OMPdeCOase_dom"/>
</dbReference>
<dbReference type="InterPro" id="IPR011060">
    <property type="entry name" value="RibuloseP-bd_barrel"/>
</dbReference>
<dbReference type="NCBIfam" id="NF001273">
    <property type="entry name" value="PRK00230.1"/>
    <property type="match status" value="1"/>
</dbReference>
<dbReference type="NCBIfam" id="TIGR01740">
    <property type="entry name" value="pyrF"/>
    <property type="match status" value="1"/>
</dbReference>
<dbReference type="PANTHER" id="PTHR32119">
    <property type="entry name" value="OROTIDINE 5'-PHOSPHATE DECARBOXYLASE"/>
    <property type="match status" value="1"/>
</dbReference>
<dbReference type="PANTHER" id="PTHR32119:SF2">
    <property type="entry name" value="OROTIDINE 5'-PHOSPHATE DECARBOXYLASE"/>
    <property type="match status" value="1"/>
</dbReference>
<dbReference type="Pfam" id="PF00215">
    <property type="entry name" value="OMPdecase"/>
    <property type="match status" value="1"/>
</dbReference>
<dbReference type="SMART" id="SM00934">
    <property type="entry name" value="OMPdecase"/>
    <property type="match status" value="1"/>
</dbReference>
<dbReference type="SUPFAM" id="SSF51366">
    <property type="entry name" value="Ribulose-phoshate binding barrel"/>
    <property type="match status" value="1"/>
</dbReference>
<dbReference type="PROSITE" id="PS00156">
    <property type="entry name" value="OMPDECASE"/>
    <property type="match status" value="1"/>
</dbReference>
<evidence type="ECO:0000255" key="1">
    <source>
        <dbReference type="HAMAP-Rule" id="MF_01200"/>
    </source>
</evidence>
<proteinExistence type="inferred from homology"/>
<name>PYRF_BRASO</name>
<sequence>MPTEIAPCDRLIVALDVPSVADAEVMIATLGDAVTFYKIGMELTYAGGLGLAERLAADGKQVFMDLKLHDIPNTVERATRQIAKLGVRFLTVHGFSQSMKAALAGAAGSPLELLAVTVMTSYDDADLATAGYAMTVKELVAHRAVQARDIGIHGLILSPEETQLVRPLVGPDMQLVTPGIRPAGSDVGDQKRIMTPALAIAGGADRLVVGRPVTGAADPAAAAEAIVADIATAVALVGKTNRS</sequence>
<comment type="function">
    <text evidence="1">Catalyzes the decarboxylation of orotidine 5'-monophosphate (OMP) to uridine 5'-monophosphate (UMP).</text>
</comment>
<comment type="catalytic activity">
    <reaction evidence="1">
        <text>orotidine 5'-phosphate + H(+) = UMP + CO2</text>
        <dbReference type="Rhea" id="RHEA:11596"/>
        <dbReference type="ChEBI" id="CHEBI:15378"/>
        <dbReference type="ChEBI" id="CHEBI:16526"/>
        <dbReference type="ChEBI" id="CHEBI:57538"/>
        <dbReference type="ChEBI" id="CHEBI:57865"/>
        <dbReference type="EC" id="4.1.1.23"/>
    </reaction>
</comment>
<comment type="pathway">
    <text evidence="1">Pyrimidine metabolism; UMP biosynthesis via de novo pathway; UMP from orotate: step 2/2.</text>
</comment>
<comment type="subunit">
    <text evidence="1">Homodimer.</text>
</comment>
<comment type="similarity">
    <text evidence="1">Belongs to the OMP decarboxylase family. Type 1 subfamily.</text>
</comment>
<organism>
    <name type="scientific">Bradyrhizobium sp. (strain ORS 278)</name>
    <dbReference type="NCBI Taxonomy" id="114615"/>
    <lineage>
        <taxon>Bacteria</taxon>
        <taxon>Pseudomonadati</taxon>
        <taxon>Pseudomonadota</taxon>
        <taxon>Alphaproteobacteria</taxon>
        <taxon>Hyphomicrobiales</taxon>
        <taxon>Nitrobacteraceae</taxon>
        <taxon>Bradyrhizobium</taxon>
    </lineage>
</organism>